<proteinExistence type="inferred from homology"/>
<feature type="chain" id="PRO_1000022673" description="Trigger factor">
    <location>
        <begin position="1"/>
        <end position="449"/>
    </location>
</feature>
<feature type="domain" description="PPIase FKBP-type" evidence="1">
    <location>
        <begin position="162"/>
        <end position="243"/>
    </location>
</feature>
<feature type="region of interest" description="Disordered" evidence="2">
    <location>
        <begin position="428"/>
        <end position="449"/>
    </location>
</feature>
<feature type="compositionally biased region" description="Basic and acidic residues" evidence="2">
    <location>
        <begin position="428"/>
        <end position="437"/>
    </location>
</feature>
<feature type="compositionally biased region" description="Acidic residues" evidence="2">
    <location>
        <begin position="438"/>
        <end position="449"/>
    </location>
</feature>
<name>TIG_CORGB</name>
<comment type="function">
    <text evidence="1">Involved in protein export. Acts as a chaperone by maintaining the newly synthesized protein in an open conformation. Functions as a peptidyl-prolyl cis-trans isomerase.</text>
</comment>
<comment type="catalytic activity">
    <reaction evidence="1">
        <text>[protein]-peptidylproline (omega=180) = [protein]-peptidylproline (omega=0)</text>
        <dbReference type="Rhea" id="RHEA:16237"/>
        <dbReference type="Rhea" id="RHEA-COMP:10747"/>
        <dbReference type="Rhea" id="RHEA-COMP:10748"/>
        <dbReference type="ChEBI" id="CHEBI:83833"/>
        <dbReference type="ChEBI" id="CHEBI:83834"/>
        <dbReference type="EC" id="5.2.1.8"/>
    </reaction>
</comment>
<comment type="subcellular location">
    <subcellularLocation>
        <location>Cytoplasm</location>
    </subcellularLocation>
    <text evidence="1">About half TF is bound to the ribosome near the polypeptide exit tunnel while the other half is free in the cytoplasm.</text>
</comment>
<comment type="domain">
    <text evidence="1">Consists of 3 domains; the N-terminus binds the ribosome, the middle domain has PPIase activity, while the C-terminus has intrinsic chaperone activity on its own.</text>
</comment>
<comment type="similarity">
    <text evidence="1">Belongs to the FKBP-type PPIase family. Tig subfamily.</text>
</comment>
<protein>
    <recommendedName>
        <fullName evidence="1">Trigger factor</fullName>
        <shortName evidence="1">TF</shortName>
        <ecNumber evidence="1">5.2.1.8</ecNumber>
    </recommendedName>
    <alternativeName>
        <fullName evidence="1">PPIase</fullName>
    </alternativeName>
</protein>
<dbReference type="EC" id="5.2.1.8" evidence="1"/>
<dbReference type="EMBL" id="AP009044">
    <property type="protein sequence ID" value="BAF55314.1"/>
    <property type="molecule type" value="Genomic_DNA"/>
</dbReference>
<dbReference type="RefSeq" id="WP_004567596.1">
    <property type="nucleotide sequence ID" value="NC_009342.1"/>
</dbReference>
<dbReference type="SMR" id="A4QGE8"/>
<dbReference type="GeneID" id="1020362"/>
<dbReference type="KEGG" id="cgt:cgR_2309"/>
<dbReference type="HOGENOM" id="CLU_033058_3_0_11"/>
<dbReference type="PhylomeDB" id="A4QGE8"/>
<dbReference type="Proteomes" id="UP000006698">
    <property type="component" value="Chromosome"/>
</dbReference>
<dbReference type="GO" id="GO:0005737">
    <property type="term" value="C:cytoplasm"/>
    <property type="evidence" value="ECO:0007669"/>
    <property type="project" value="UniProtKB-SubCell"/>
</dbReference>
<dbReference type="GO" id="GO:0003755">
    <property type="term" value="F:peptidyl-prolyl cis-trans isomerase activity"/>
    <property type="evidence" value="ECO:0007669"/>
    <property type="project" value="UniProtKB-UniRule"/>
</dbReference>
<dbReference type="GO" id="GO:0044183">
    <property type="term" value="F:protein folding chaperone"/>
    <property type="evidence" value="ECO:0007669"/>
    <property type="project" value="TreeGrafter"/>
</dbReference>
<dbReference type="GO" id="GO:0043022">
    <property type="term" value="F:ribosome binding"/>
    <property type="evidence" value="ECO:0007669"/>
    <property type="project" value="TreeGrafter"/>
</dbReference>
<dbReference type="GO" id="GO:0051083">
    <property type="term" value="P:'de novo' cotranslational protein folding"/>
    <property type="evidence" value="ECO:0007669"/>
    <property type="project" value="TreeGrafter"/>
</dbReference>
<dbReference type="GO" id="GO:0051301">
    <property type="term" value="P:cell division"/>
    <property type="evidence" value="ECO:0007669"/>
    <property type="project" value="UniProtKB-KW"/>
</dbReference>
<dbReference type="GO" id="GO:0061077">
    <property type="term" value="P:chaperone-mediated protein folding"/>
    <property type="evidence" value="ECO:0007669"/>
    <property type="project" value="TreeGrafter"/>
</dbReference>
<dbReference type="GO" id="GO:0015031">
    <property type="term" value="P:protein transport"/>
    <property type="evidence" value="ECO:0007669"/>
    <property type="project" value="UniProtKB-UniRule"/>
</dbReference>
<dbReference type="GO" id="GO:0043335">
    <property type="term" value="P:protein unfolding"/>
    <property type="evidence" value="ECO:0007669"/>
    <property type="project" value="TreeGrafter"/>
</dbReference>
<dbReference type="Gene3D" id="3.10.50.40">
    <property type="match status" value="1"/>
</dbReference>
<dbReference type="Gene3D" id="3.30.70.1050">
    <property type="entry name" value="Trigger factor ribosome-binding domain"/>
    <property type="match status" value="1"/>
</dbReference>
<dbReference type="Gene3D" id="1.10.3120.10">
    <property type="entry name" value="Trigger factor, C-terminal domain"/>
    <property type="match status" value="1"/>
</dbReference>
<dbReference type="HAMAP" id="MF_00303">
    <property type="entry name" value="Trigger_factor_Tig"/>
    <property type="match status" value="1"/>
</dbReference>
<dbReference type="InterPro" id="IPR046357">
    <property type="entry name" value="PPIase_dom_sf"/>
</dbReference>
<dbReference type="InterPro" id="IPR001179">
    <property type="entry name" value="PPIase_FKBP_dom"/>
</dbReference>
<dbReference type="InterPro" id="IPR005215">
    <property type="entry name" value="Trig_fac"/>
</dbReference>
<dbReference type="InterPro" id="IPR008880">
    <property type="entry name" value="Trigger_fac_C"/>
</dbReference>
<dbReference type="InterPro" id="IPR037041">
    <property type="entry name" value="Trigger_fac_C_sf"/>
</dbReference>
<dbReference type="InterPro" id="IPR008881">
    <property type="entry name" value="Trigger_fac_ribosome-bd_bac"/>
</dbReference>
<dbReference type="InterPro" id="IPR036611">
    <property type="entry name" value="Trigger_fac_ribosome-bd_sf"/>
</dbReference>
<dbReference type="InterPro" id="IPR027304">
    <property type="entry name" value="Trigger_fact/SurA_dom_sf"/>
</dbReference>
<dbReference type="NCBIfam" id="TIGR00115">
    <property type="entry name" value="tig"/>
    <property type="match status" value="1"/>
</dbReference>
<dbReference type="PANTHER" id="PTHR30560">
    <property type="entry name" value="TRIGGER FACTOR CHAPERONE AND PEPTIDYL-PROLYL CIS/TRANS ISOMERASE"/>
    <property type="match status" value="1"/>
</dbReference>
<dbReference type="PANTHER" id="PTHR30560:SF3">
    <property type="entry name" value="TRIGGER FACTOR-LIKE PROTEIN TIG, CHLOROPLASTIC"/>
    <property type="match status" value="1"/>
</dbReference>
<dbReference type="Pfam" id="PF00254">
    <property type="entry name" value="FKBP_C"/>
    <property type="match status" value="1"/>
</dbReference>
<dbReference type="Pfam" id="PF05698">
    <property type="entry name" value="Trigger_C"/>
    <property type="match status" value="1"/>
</dbReference>
<dbReference type="Pfam" id="PF05697">
    <property type="entry name" value="Trigger_N"/>
    <property type="match status" value="1"/>
</dbReference>
<dbReference type="PIRSF" id="PIRSF003095">
    <property type="entry name" value="Trigger_factor"/>
    <property type="match status" value="1"/>
</dbReference>
<dbReference type="SUPFAM" id="SSF54534">
    <property type="entry name" value="FKBP-like"/>
    <property type="match status" value="1"/>
</dbReference>
<dbReference type="SUPFAM" id="SSF109998">
    <property type="entry name" value="Triger factor/SurA peptide-binding domain-like"/>
    <property type="match status" value="1"/>
</dbReference>
<dbReference type="SUPFAM" id="SSF102735">
    <property type="entry name" value="Trigger factor ribosome-binding domain"/>
    <property type="match status" value="1"/>
</dbReference>
<dbReference type="PROSITE" id="PS50059">
    <property type="entry name" value="FKBP_PPIASE"/>
    <property type="match status" value="1"/>
</dbReference>
<organism>
    <name type="scientific">Corynebacterium glutamicum (strain R)</name>
    <dbReference type="NCBI Taxonomy" id="340322"/>
    <lineage>
        <taxon>Bacteria</taxon>
        <taxon>Bacillati</taxon>
        <taxon>Actinomycetota</taxon>
        <taxon>Actinomycetes</taxon>
        <taxon>Mycobacteriales</taxon>
        <taxon>Corynebacteriaceae</taxon>
        <taxon>Corynebacterium</taxon>
    </lineage>
</organism>
<reference key="1">
    <citation type="journal article" date="2007" name="Microbiology">
        <title>Comparative analysis of the Corynebacterium glutamicum group and complete genome sequence of strain R.</title>
        <authorList>
            <person name="Yukawa H."/>
            <person name="Omumasaba C.A."/>
            <person name="Nonaka H."/>
            <person name="Kos P."/>
            <person name="Okai N."/>
            <person name="Suzuki N."/>
            <person name="Suda M."/>
            <person name="Tsuge Y."/>
            <person name="Watanabe J."/>
            <person name="Ikeda Y."/>
            <person name="Vertes A.A."/>
            <person name="Inui M."/>
        </authorList>
    </citation>
    <scope>NUCLEOTIDE SEQUENCE [LARGE SCALE GENOMIC DNA]</scope>
    <source>
        <strain>R</strain>
    </source>
</reference>
<sequence length="449" mass="49698">MKSSVEKLSDTRSKITVEVPFSELKPEIDQAYAALAQQVQIPGFRKGKAPRQLIDARFGRGAVLEQVVNDMLPNRYAQAIEAEGIKAIGQPNVEVTKIEDNELVEFVAEVDVRPEFELPKFEDITVEVPAIKADEEAIEAELETLRARFSTLKDHNHKLKKGEFVTINITASIDGEKIEEATTEGLSYEIGSDDLIDGLDKALIGAKKDETVEFTSELANGEHKGKEAQISVEITATKQRELPELDDEFAQLASEFDTIEELRESTVSDVEAKQKNEQAAAIRDEVLAAALGEADFALPQSIVDEQAHSQLHQLLGELAHDDAALNSLLEAQGTTREEFDKKNVEDAEKAVRTQLFLDTLSEVEEPEVSQQELTDHILFTAQSYGMDPNQFIGQLQQSGQIANLFSDVRRGKALAQAICRVNVKDSEGNEIDPKEYFGEEEVAETESEA</sequence>
<keyword id="KW-0131">Cell cycle</keyword>
<keyword id="KW-0132">Cell division</keyword>
<keyword id="KW-0143">Chaperone</keyword>
<keyword id="KW-0963">Cytoplasm</keyword>
<keyword id="KW-0413">Isomerase</keyword>
<keyword id="KW-0697">Rotamase</keyword>
<accession>A4QGE8</accession>
<evidence type="ECO:0000255" key="1">
    <source>
        <dbReference type="HAMAP-Rule" id="MF_00303"/>
    </source>
</evidence>
<evidence type="ECO:0000256" key="2">
    <source>
        <dbReference type="SAM" id="MobiDB-lite"/>
    </source>
</evidence>
<gene>
    <name evidence="1" type="primary">tig</name>
    <name type="ordered locus">cgR_2309</name>
</gene>